<feature type="chain" id="PRO_1000203000" description="33 kDa chaperonin">
    <location>
        <begin position="1"/>
        <end position="289"/>
    </location>
</feature>
<feature type="disulfide bond" description="Redox-active" evidence="1">
    <location>
        <begin position="229"/>
        <end position="231"/>
    </location>
</feature>
<feature type="disulfide bond" description="Redox-active" evidence="1">
    <location>
        <begin position="262"/>
        <end position="265"/>
    </location>
</feature>
<sequence>MAHDQLYRYLFENYAVRGELVTVNETYQRILTNHDYPSAVQTLLGEMLVATSLLTATLKFSGDITVQLQGDGPLKLAVINGNHQQQMRGVARLQGDIAPGSSLKEMVGNGYLVITITPTEGERYQGVVGLEGETVAECLESYFQQSEQLPTRLFIRTGQHEGKQAAAGMLLQVLPAQDADRDDFDHLAQLTTTVKGEELFSLPATEVLYRLYHQEEVTVYEPQDVEFRCHCSRDRCADALMTLSDQEVNEMIEQDGEIDMHCDYCGTHYLFNSLDIRAIRHDSSGNLLH</sequence>
<keyword id="KW-0143">Chaperone</keyword>
<keyword id="KW-0963">Cytoplasm</keyword>
<keyword id="KW-1015">Disulfide bond</keyword>
<keyword id="KW-0676">Redox-active center</keyword>
<keyword id="KW-0862">Zinc</keyword>
<organism>
    <name type="scientific">Pectobacterium carotovorum subsp. carotovorum (strain PC1)</name>
    <dbReference type="NCBI Taxonomy" id="561230"/>
    <lineage>
        <taxon>Bacteria</taxon>
        <taxon>Pseudomonadati</taxon>
        <taxon>Pseudomonadota</taxon>
        <taxon>Gammaproteobacteria</taxon>
        <taxon>Enterobacterales</taxon>
        <taxon>Pectobacteriaceae</taxon>
        <taxon>Pectobacterium</taxon>
    </lineage>
</organism>
<comment type="function">
    <text evidence="1">Redox regulated molecular chaperone. Protects both thermally unfolding and oxidatively damaged proteins from irreversible aggregation. Plays an important role in the bacterial defense system toward oxidative stress.</text>
</comment>
<comment type="subcellular location">
    <subcellularLocation>
        <location evidence="1">Cytoplasm</location>
    </subcellularLocation>
</comment>
<comment type="PTM">
    <text evidence="1">Under oxidizing conditions two disulfide bonds are formed involving the reactive cysteines. Under reducing conditions zinc is bound to the reactive cysteines and the protein is inactive.</text>
</comment>
<comment type="similarity">
    <text evidence="1">Belongs to the HSP33 family.</text>
</comment>
<dbReference type="EMBL" id="CP001657">
    <property type="protein sequence ID" value="ACT14910.1"/>
    <property type="molecule type" value="Genomic_DNA"/>
</dbReference>
<dbReference type="RefSeq" id="WP_015841993.1">
    <property type="nucleotide sequence ID" value="NC_012917.1"/>
</dbReference>
<dbReference type="SMR" id="C6DGE7"/>
<dbReference type="STRING" id="561230.PC1_3895"/>
<dbReference type="GeneID" id="67792209"/>
<dbReference type="KEGG" id="pct:PC1_3895"/>
<dbReference type="eggNOG" id="COG1281">
    <property type="taxonomic scope" value="Bacteria"/>
</dbReference>
<dbReference type="HOGENOM" id="CLU_054493_0_0_6"/>
<dbReference type="OrthoDB" id="9793753at2"/>
<dbReference type="Proteomes" id="UP000002736">
    <property type="component" value="Chromosome"/>
</dbReference>
<dbReference type="GO" id="GO:0005737">
    <property type="term" value="C:cytoplasm"/>
    <property type="evidence" value="ECO:0007669"/>
    <property type="project" value="UniProtKB-SubCell"/>
</dbReference>
<dbReference type="GO" id="GO:0044183">
    <property type="term" value="F:protein folding chaperone"/>
    <property type="evidence" value="ECO:0007669"/>
    <property type="project" value="TreeGrafter"/>
</dbReference>
<dbReference type="GO" id="GO:0051082">
    <property type="term" value="F:unfolded protein binding"/>
    <property type="evidence" value="ECO:0007669"/>
    <property type="project" value="UniProtKB-UniRule"/>
</dbReference>
<dbReference type="GO" id="GO:0042026">
    <property type="term" value="P:protein refolding"/>
    <property type="evidence" value="ECO:0007669"/>
    <property type="project" value="TreeGrafter"/>
</dbReference>
<dbReference type="CDD" id="cd00498">
    <property type="entry name" value="Hsp33"/>
    <property type="match status" value="1"/>
</dbReference>
<dbReference type="Gene3D" id="1.10.287.480">
    <property type="entry name" value="helix hairpin bin"/>
    <property type="match status" value="1"/>
</dbReference>
<dbReference type="Gene3D" id="3.55.30.10">
    <property type="entry name" value="Hsp33 domain"/>
    <property type="match status" value="1"/>
</dbReference>
<dbReference type="Gene3D" id="3.90.1280.10">
    <property type="entry name" value="HSP33 redox switch-like"/>
    <property type="match status" value="1"/>
</dbReference>
<dbReference type="HAMAP" id="MF_00117">
    <property type="entry name" value="HslO"/>
    <property type="match status" value="1"/>
</dbReference>
<dbReference type="InterPro" id="IPR000397">
    <property type="entry name" value="Heat_shock_Hsp33"/>
</dbReference>
<dbReference type="InterPro" id="IPR016154">
    <property type="entry name" value="Heat_shock_Hsp33_C"/>
</dbReference>
<dbReference type="InterPro" id="IPR016153">
    <property type="entry name" value="Heat_shock_Hsp33_N"/>
</dbReference>
<dbReference type="InterPro" id="IPR023212">
    <property type="entry name" value="Hsp33_helix_hairpin_bin_dom_sf"/>
</dbReference>
<dbReference type="NCBIfam" id="NF001033">
    <property type="entry name" value="PRK00114.1"/>
    <property type="match status" value="1"/>
</dbReference>
<dbReference type="PANTHER" id="PTHR30111">
    <property type="entry name" value="33 KDA CHAPERONIN"/>
    <property type="match status" value="1"/>
</dbReference>
<dbReference type="PANTHER" id="PTHR30111:SF1">
    <property type="entry name" value="33 KDA CHAPERONIN"/>
    <property type="match status" value="1"/>
</dbReference>
<dbReference type="Pfam" id="PF01430">
    <property type="entry name" value="HSP33"/>
    <property type="match status" value="1"/>
</dbReference>
<dbReference type="PIRSF" id="PIRSF005261">
    <property type="entry name" value="Heat_shock_Hsp33"/>
    <property type="match status" value="1"/>
</dbReference>
<dbReference type="SUPFAM" id="SSF64397">
    <property type="entry name" value="Hsp33 domain"/>
    <property type="match status" value="1"/>
</dbReference>
<dbReference type="SUPFAM" id="SSF118352">
    <property type="entry name" value="HSP33 redox switch-like"/>
    <property type="match status" value="1"/>
</dbReference>
<proteinExistence type="inferred from homology"/>
<name>HSLO_PECCP</name>
<accession>C6DGE7</accession>
<protein>
    <recommendedName>
        <fullName evidence="1">33 kDa chaperonin</fullName>
    </recommendedName>
    <alternativeName>
        <fullName evidence="1">Heat shock protein 33 homolog</fullName>
        <shortName evidence="1">HSP33</shortName>
    </alternativeName>
</protein>
<evidence type="ECO:0000255" key="1">
    <source>
        <dbReference type="HAMAP-Rule" id="MF_00117"/>
    </source>
</evidence>
<gene>
    <name evidence="1" type="primary">hslO</name>
    <name type="ordered locus">PC1_3895</name>
</gene>
<reference key="1">
    <citation type="submission" date="2009-07" db="EMBL/GenBank/DDBJ databases">
        <title>Complete sequence of Pectobacterium carotovorum subsp. carotovorum PC1.</title>
        <authorList>
            <consortium name="US DOE Joint Genome Institute"/>
            <person name="Lucas S."/>
            <person name="Copeland A."/>
            <person name="Lapidus A."/>
            <person name="Glavina del Rio T."/>
            <person name="Tice H."/>
            <person name="Bruce D."/>
            <person name="Goodwin L."/>
            <person name="Pitluck S."/>
            <person name="Munk A.C."/>
            <person name="Brettin T."/>
            <person name="Detter J.C."/>
            <person name="Han C."/>
            <person name="Tapia R."/>
            <person name="Larimer F."/>
            <person name="Land M."/>
            <person name="Hauser L."/>
            <person name="Kyrpides N."/>
            <person name="Mikhailova N."/>
            <person name="Balakrishnan V."/>
            <person name="Glasner J."/>
            <person name="Perna N.T."/>
        </authorList>
    </citation>
    <scope>NUCLEOTIDE SEQUENCE [LARGE SCALE GENOMIC DNA]</scope>
    <source>
        <strain>PC1</strain>
    </source>
</reference>